<gene>
    <name type="primary">gh-a</name>
    <name type="synonym">gha</name>
</gene>
<comment type="function">
    <text>Growth hormone plays an important role in growth control.</text>
</comment>
<comment type="subcellular location">
    <subcellularLocation>
        <location>Secreted</location>
    </subcellularLocation>
</comment>
<comment type="similarity">
    <text evidence="2">Belongs to the somatotropin/prolactin family.</text>
</comment>
<dbReference type="EMBL" id="AF193797">
    <property type="protein sequence ID" value="AAF05773.1"/>
    <property type="molecule type" value="mRNA"/>
</dbReference>
<dbReference type="EMBL" id="X14601">
    <property type="protein sequence ID" value="CAA32746.1"/>
    <property type="molecule type" value="mRNA"/>
</dbReference>
<dbReference type="PIR" id="S04353">
    <property type="entry name" value="S04353"/>
</dbReference>
<dbReference type="RefSeq" id="XP_018092876.1">
    <property type="nucleotide sequence ID" value="XM_018237387.1"/>
</dbReference>
<dbReference type="SMR" id="P12855"/>
<dbReference type="KEGG" id="xla:399154"/>
<dbReference type="CTD" id="399154"/>
<dbReference type="OrthoDB" id="9925773at2759"/>
<dbReference type="Proteomes" id="UP000186698">
    <property type="component" value="Chromosome 9_10S"/>
</dbReference>
<dbReference type="Bgee" id="399154">
    <property type="expression patterns" value="Expressed in brain"/>
</dbReference>
<dbReference type="GO" id="GO:0005615">
    <property type="term" value="C:extracellular space"/>
    <property type="evidence" value="ECO:0000318"/>
    <property type="project" value="GO_Central"/>
</dbReference>
<dbReference type="GO" id="GO:0008083">
    <property type="term" value="F:growth factor activity"/>
    <property type="evidence" value="ECO:0000318"/>
    <property type="project" value="GO_Central"/>
</dbReference>
<dbReference type="GO" id="GO:0005131">
    <property type="term" value="F:growth hormone receptor binding"/>
    <property type="evidence" value="ECO:0000318"/>
    <property type="project" value="GO_Central"/>
</dbReference>
<dbReference type="GO" id="GO:0005179">
    <property type="term" value="F:hormone activity"/>
    <property type="evidence" value="ECO:0000318"/>
    <property type="project" value="GO_Central"/>
</dbReference>
<dbReference type="GO" id="GO:0048513">
    <property type="term" value="P:animal organ development"/>
    <property type="evidence" value="ECO:0000318"/>
    <property type="project" value="GO_Central"/>
</dbReference>
<dbReference type="GO" id="GO:0060396">
    <property type="term" value="P:growth hormone receptor signaling pathway"/>
    <property type="evidence" value="ECO:0000318"/>
    <property type="project" value="GO_Central"/>
</dbReference>
<dbReference type="GO" id="GO:0045927">
    <property type="term" value="P:positive regulation of growth"/>
    <property type="evidence" value="ECO:0007669"/>
    <property type="project" value="TreeGrafter"/>
</dbReference>
<dbReference type="GO" id="GO:0046427">
    <property type="term" value="P:positive regulation of receptor signaling pathway via JAK-STAT"/>
    <property type="evidence" value="ECO:0000318"/>
    <property type="project" value="GO_Central"/>
</dbReference>
<dbReference type="GO" id="GO:0031667">
    <property type="term" value="P:response to nutrient levels"/>
    <property type="evidence" value="ECO:0000318"/>
    <property type="project" value="GO_Central"/>
</dbReference>
<dbReference type="CDD" id="cd10285">
    <property type="entry name" value="somatotropin_like"/>
    <property type="match status" value="1"/>
</dbReference>
<dbReference type="FunFam" id="1.20.1250.10:FF:000053">
    <property type="entry name" value="Growth hormone 2"/>
    <property type="match status" value="1"/>
</dbReference>
<dbReference type="Gene3D" id="1.20.1250.10">
    <property type="match status" value="1"/>
</dbReference>
<dbReference type="InterPro" id="IPR009079">
    <property type="entry name" value="4_helix_cytokine-like_core"/>
</dbReference>
<dbReference type="InterPro" id="IPR034975">
    <property type="entry name" value="Somatotropin"/>
</dbReference>
<dbReference type="InterPro" id="IPR001400">
    <property type="entry name" value="Somatotropin/Prolactin"/>
</dbReference>
<dbReference type="InterPro" id="IPR018116">
    <property type="entry name" value="Somatotropin_CS"/>
</dbReference>
<dbReference type="PANTHER" id="PTHR11417:SF2">
    <property type="entry name" value="SOMATOTROPIN"/>
    <property type="match status" value="1"/>
</dbReference>
<dbReference type="PANTHER" id="PTHR11417">
    <property type="entry name" value="SOMATOTROPIN,PROLACTIN"/>
    <property type="match status" value="1"/>
</dbReference>
<dbReference type="Pfam" id="PF00103">
    <property type="entry name" value="Hormone_1"/>
    <property type="match status" value="1"/>
</dbReference>
<dbReference type="PRINTS" id="PR00836">
    <property type="entry name" value="SOMATOTROPIN"/>
</dbReference>
<dbReference type="SUPFAM" id="SSF47266">
    <property type="entry name" value="4-helical cytokines"/>
    <property type="match status" value="1"/>
</dbReference>
<dbReference type="PROSITE" id="PS00338">
    <property type="entry name" value="SOMATOTROPIN_2"/>
    <property type="match status" value="1"/>
</dbReference>
<organism>
    <name type="scientific">Xenopus laevis</name>
    <name type="common">African clawed frog</name>
    <dbReference type="NCBI Taxonomy" id="8355"/>
    <lineage>
        <taxon>Eukaryota</taxon>
        <taxon>Metazoa</taxon>
        <taxon>Chordata</taxon>
        <taxon>Craniata</taxon>
        <taxon>Vertebrata</taxon>
        <taxon>Euteleostomi</taxon>
        <taxon>Amphibia</taxon>
        <taxon>Batrachia</taxon>
        <taxon>Anura</taxon>
        <taxon>Pipoidea</taxon>
        <taxon>Pipidae</taxon>
        <taxon>Xenopodinae</taxon>
        <taxon>Xenopus</taxon>
        <taxon>Xenopus</taxon>
    </lineage>
</organism>
<evidence type="ECO:0000250" key="1"/>
<evidence type="ECO:0000305" key="2"/>
<protein>
    <recommendedName>
        <fullName>Somatotropin-A</fullName>
    </recommendedName>
    <alternativeName>
        <fullName>Growth hormone A</fullName>
        <shortName>GH-A</shortName>
    </alternativeName>
</protein>
<keyword id="KW-1015">Disulfide bond</keyword>
<keyword id="KW-0372">Hormone</keyword>
<keyword id="KW-1185">Reference proteome</keyword>
<keyword id="KW-0964">Secreted</keyword>
<keyword id="KW-0732">Signal</keyword>
<reference key="1">
    <citation type="journal article" date="2000" name="Proc. Natl. Acad. Sci. U.S.A.">
        <title>Overexpression of Xenopus laevis growth hormone stimulates growth of tadpoles and frogs.</title>
        <authorList>
            <person name="Huang H."/>
            <person name="Brown D.D."/>
        </authorList>
    </citation>
    <scope>NUCLEOTIDE SEQUENCE [MRNA]</scope>
</reference>
<reference key="2">
    <citation type="journal article" date="1989" name="Nucleic Acids Res.">
        <title>Expression of two growth hormone genes in the Xenopus pituitary gland.</title>
        <authorList>
            <person name="Martens G.J.M."/>
            <person name="Groenen P.J.T.A."/>
            <person name="Braks A.A.M."/>
            <person name="Bussemakers M.J.G."/>
        </authorList>
    </citation>
    <scope>NUCLEOTIDE SEQUENCE [MRNA] OF 76-214</scope>
    <source>
        <tissue>Pituitary</tissue>
    </source>
</reference>
<feature type="signal peptide" evidence="1">
    <location>
        <begin position="1"/>
        <end position="25"/>
    </location>
</feature>
<feature type="chain" id="PRO_0000033009" description="Somatotropin-A">
    <location>
        <begin position="26"/>
        <end position="214"/>
    </location>
</feature>
<feature type="disulfide bond" evidence="1">
    <location>
        <begin position="77"/>
        <end position="187"/>
    </location>
</feature>
<feature type="disulfide bond" evidence="1">
    <location>
        <begin position="204"/>
        <end position="212"/>
    </location>
</feature>
<feature type="sequence conflict" description="In Ref. 2." evidence="2" ref="2">
    <original>S</original>
    <variation>F</variation>
    <location>
        <position position="76"/>
    </location>
</feature>
<feature type="sequence conflict" description="In Ref. 2; CAA32746." evidence="2" ref="2">
    <original>I</original>
    <variation>M</variation>
    <location>
        <position position="82"/>
    </location>
</feature>
<feature type="sequence conflict" description="In Ref. 2; CAA32746." evidence="2" ref="2">
    <original>L</original>
    <variation>M</variation>
    <location>
        <position position="97"/>
    </location>
</feature>
<feature type="sequence conflict" description="In Ref. 2; CAA32746." evidence="2" ref="2">
    <original>LN</original>
    <variation>QT</variation>
    <location>
        <begin position="104"/>
        <end position="105"/>
    </location>
</feature>
<feature type="sequence conflict" description="In Ref. 2; CAA32746." evidence="2" ref="2">
    <original>N</original>
    <variation>S</variation>
    <location>
        <position position="118"/>
    </location>
</feature>
<feature type="sequence conflict" description="In Ref. 2; CAA32746." evidence="2" ref="2">
    <original>Q</original>
    <variation>R</variation>
    <location>
        <position position="148"/>
    </location>
</feature>
<feature type="sequence conflict" description="In Ref. 2; CAA32746." evidence="2" ref="2">
    <original>F</original>
    <variation>V</variation>
    <location>
        <position position="160"/>
    </location>
</feature>
<feature type="sequence conflict" description="In Ref. 2; CAA32746." evidence="2" ref="2">
    <original>P</original>
    <variation>L</variation>
    <location>
        <position position="164"/>
    </location>
</feature>
<feature type="sequence conflict" description="In Ref. 2; CAA32746." evidence="2" ref="2">
    <original>D</original>
    <variation>E</variation>
    <location>
        <position position="176"/>
    </location>
</feature>
<name>SOMA1_XENLA</name>
<sequence length="214" mass="24700">MATGFCSSFGLLVVLLLKNVADVGAFPSVPLFSLFTNAVSRAQYIHMLAADTYRDYERTYITDEQRHSNKNSHVVSCYSETIPYPTDKDNTHQKSDLELLRFSLNLIQSWLNPVQALNKVFSNNLVFGSSDVYERLKYLEEGIQALMQELEDGSFRSFPFLRPPYERFDINLRSDDALVKVYGLLSCFKKDMHKVETYLKVMKCRRFVESNCTI</sequence>
<proteinExistence type="evidence at transcript level"/>
<accession>P12855</accession>
<accession>Q9PTI3</accession>